<evidence type="ECO:0000255" key="1">
    <source>
        <dbReference type="HAMAP-Rule" id="MF_01969"/>
    </source>
</evidence>
<accession>A9VHP8</accession>
<reference key="1">
    <citation type="journal article" date="2008" name="Chem. Biol. Interact.">
        <title>Extending the Bacillus cereus group genomics to putative food-borne pathogens of different toxicity.</title>
        <authorList>
            <person name="Lapidus A."/>
            <person name="Goltsman E."/>
            <person name="Auger S."/>
            <person name="Galleron N."/>
            <person name="Segurens B."/>
            <person name="Dossat C."/>
            <person name="Land M.L."/>
            <person name="Broussolle V."/>
            <person name="Brillard J."/>
            <person name="Guinebretiere M.-H."/>
            <person name="Sanchis V."/>
            <person name="Nguen-the C."/>
            <person name="Lereclus D."/>
            <person name="Richardson P."/>
            <person name="Wincker P."/>
            <person name="Weissenbach J."/>
            <person name="Ehrlich S.D."/>
            <person name="Sorokin A."/>
        </authorList>
    </citation>
    <scope>NUCLEOTIDE SEQUENCE [LARGE SCALE GENOMIC DNA]</scope>
    <source>
        <strain>KBAB4</strain>
    </source>
</reference>
<dbReference type="EC" id="3.5.1.9" evidence="1"/>
<dbReference type="EMBL" id="CP000903">
    <property type="protein sequence ID" value="ABY43762.1"/>
    <property type="molecule type" value="Genomic_DNA"/>
</dbReference>
<dbReference type="RefSeq" id="WP_002065849.1">
    <property type="nucleotide sequence ID" value="NC_010184.1"/>
</dbReference>
<dbReference type="SMR" id="A9VHP8"/>
<dbReference type="KEGG" id="bwe:BcerKBAB4_2558"/>
<dbReference type="eggNOG" id="COG1878">
    <property type="taxonomic scope" value="Bacteria"/>
</dbReference>
<dbReference type="HOGENOM" id="CLU_030671_3_1_9"/>
<dbReference type="UniPathway" id="UPA00333">
    <property type="reaction ID" value="UER00454"/>
</dbReference>
<dbReference type="Proteomes" id="UP000002154">
    <property type="component" value="Chromosome"/>
</dbReference>
<dbReference type="GO" id="GO:0004061">
    <property type="term" value="F:arylformamidase activity"/>
    <property type="evidence" value="ECO:0000250"/>
    <property type="project" value="UniProtKB"/>
</dbReference>
<dbReference type="GO" id="GO:0004328">
    <property type="term" value="F:formamidase activity"/>
    <property type="evidence" value="ECO:0007669"/>
    <property type="project" value="InterPro"/>
</dbReference>
<dbReference type="GO" id="GO:0008270">
    <property type="term" value="F:zinc ion binding"/>
    <property type="evidence" value="ECO:0007669"/>
    <property type="project" value="UniProtKB-UniRule"/>
</dbReference>
<dbReference type="GO" id="GO:0043420">
    <property type="term" value="P:anthranilate metabolic process"/>
    <property type="evidence" value="ECO:0000250"/>
    <property type="project" value="UniProtKB"/>
</dbReference>
<dbReference type="GO" id="GO:0019441">
    <property type="term" value="P:L-tryptophan catabolic process to kynurenine"/>
    <property type="evidence" value="ECO:0000250"/>
    <property type="project" value="UniProtKB"/>
</dbReference>
<dbReference type="FunFam" id="3.50.30.50:FF:000001">
    <property type="entry name" value="Kynurenine formamidase"/>
    <property type="match status" value="1"/>
</dbReference>
<dbReference type="Gene3D" id="3.50.30.50">
    <property type="entry name" value="Putative cyclase"/>
    <property type="match status" value="1"/>
</dbReference>
<dbReference type="HAMAP" id="MF_01969">
    <property type="entry name" value="KynB"/>
    <property type="match status" value="1"/>
</dbReference>
<dbReference type="InterPro" id="IPR007325">
    <property type="entry name" value="KFase/CYL"/>
</dbReference>
<dbReference type="InterPro" id="IPR037175">
    <property type="entry name" value="KFase_sf"/>
</dbReference>
<dbReference type="InterPro" id="IPR017484">
    <property type="entry name" value="Kynurenine_formamidase_bac"/>
</dbReference>
<dbReference type="NCBIfam" id="TIGR03035">
    <property type="entry name" value="trp_arylform"/>
    <property type="match status" value="1"/>
</dbReference>
<dbReference type="PANTHER" id="PTHR31118">
    <property type="entry name" value="CYCLASE-LIKE PROTEIN 2"/>
    <property type="match status" value="1"/>
</dbReference>
<dbReference type="PANTHER" id="PTHR31118:SF32">
    <property type="entry name" value="KYNURENINE FORMAMIDASE"/>
    <property type="match status" value="1"/>
</dbReference>
<dbReference type="Pfam" id="PF04199">
    <property type="entry name" value="Cyclase"/>
    <property type="match status" value="1"/>
</dbReference>
<dbReference type="SUPFAM" id="SSF102198">
    <property type="entry name" value="Putative cyclase"/>
    <property type="match status" value="1"/>
</dbReference>
<gene>
    <name evidence="1" type="primary">kynB</name>
    <name type="ordered locus">BcerKBAB4_2558</name>
</gene>
<protein>
    <recommendedName>
        <fullName evidence="1">Kynurenine formamidase</fullName>
        <shortName evidence="1">KFA</shortName>
        <shortName evidence="1">KFase</shortName>
        <ecNumber evidence="1">3.5.1.9</ecNumber>
    </recommendedName>
    <alternativeName>
        <fullName evidence="1">Arylformamidase</fullName>
    </alternativeName>
    <alternativeName>
        <fullName evidence="1">N-formylkynurenine formamidase</fullName>
        <shortName evidence="1">FKF</shortName>
    </alternativeName>
</protein>
<feature type="chain" id="PRO_0000362094" description="Kynurenine formamidase">
    <location>
        <begin position="1"/>
        <end position="209"/>
    </location>
</feature>
<feature type="active site" description="Proton donor/acceptor" evidence="1">
    <location>
        <position position="60"/>
    </location>
</feature>
<feature type="binding site" evidence="1">
    <location>
        <position position="20"/>
    </location>
    <ligand>
        <name>substrate</name>
    </ligand>
</feature>
<feature type="binding site" evidence="1">
    <location>
        <position position="50"/>
    </location>
    <ligand>
        <name>Zn(2+)</name>
        <dbReference type="ChEBI" id="CHEBI:29105"/>
        <label>1</label>
    </ligand>
</feature>
<feature type="binding site" evidence="1">
    <location>
        <position position="54"/>
    </location>
    <ligand>
        <name>Zn(2+)</name>
        <dbReference type="ChEBI" id="CHEBI:29105"/>
        <label>1</label>
    </ligand>
</feature>
<feature type="binding site" evidence="1">
    <location>
        <position position="56"/>
    </location>
    <ligand>
        <name>Zn(2+)</name>
        <dbReference type="ChEBI" id="CHEBI:29105"/>
        <label>1</label>
    </ligand>
</feature>
<feature type="binding site" evidence="1">
    <location>
        <position position="56"/>
    </location>
    <ligand>
        <name>Zn(2+)</name>
        <dbReference type="ChEBI" id="CHEBI:29105"/>
        <label>2</label>
    </ligand>
</feature>
<feature type="binding site" evidence="1">
    <location>
        <position position="161"/>
    </location>
    <ligand>
        <name>Zn(2+)</name>
        <dbReference type="ChEBI" id="CHEBI:29105"/>
        <label>2</label>
    </ligand>
</feature>
<feature type="binding site" evidence="1">
    <location>
        <position position="173"/>
    </location>
    <ligand>
        <name>Zn(2+)</name>
        <dbReference type="ChEBI" id="CHEBI:29105"/>
        <label>1</label>
    </ligand>
</feature>
<feature type="binding site" evidence="1">
    <location>
        <position position="173"/>
    </location>
    <ligand>
        <name>Zn(2+)</name>
        <dbReference type="ChEBI" id="CHEBI:29105"/>
        <label>2</label>
    </ligand>
</feature>
<proteinExistence type="inferred from homology"/>
<sequence length="209" mass="23075">MKTSQWIDISQPLNNDIATWPGDTPFSYEVSWSKENSGSVNVGKLTMSIHTGTHIDAPFHFDNDGKKVLDLDIQVYVGPARIIDVSNLESIGKKELENFHLEGVERLLLRTSSHGKANEFPDVIPHLRADIAAFLSEKGIRLIGVDVPSVDPLDDKELAAHHQLFKHGIHILENVVLDHVVDGDYELIALPLALTDADGSPVRAVIRPI</sequence>
<name>KYNB_BACMK</name>
<organism>
    <name type="scientific">Bacillus mycoides (strain KBAB4)</name>
    <name type="common">Bacillus weihenstephanensis</name>
    <dbReference type="NCBI Taxonomy" id="315730"/>
    <lineage>
        <taxon>Bacteria</taxon>
        <taxon>Bacillati</taxon>
        <taxon>Bacillota</taxon>
        <taxon>Bacilli</taxon>
        <taxon>Bacillales</taxon>
        <taxon>Bacillaceae</taxon>
        <taxon>Bacillus</taxon>
        <taxon>Bacillus cereus group</taxon>
    </lineage>
</organism>
<comment type="function">
    <text evidence="1">Catalyzes the hydrolysis of N-formyl-L-kynurenine to L-kynurenine, the second step in the kynurenine pathway of tryptophan degradation.</text>
</comment>
<comment type="catalytic activity">
    <reaction evidence="1">
        <text>N-formyl-L-kynurenine + H2O = L-kynurenine + formate + H(+)</text>
        <dbReference type="Rhea" id="RHEA:13009"/>
        <dbReference type="ChEBI" id="CHEBI:15377"/>
        <dbReference type="ChEBI" id="CHEBI:15378"/>
        <dbReference type="ChEBI" id="CHEBI:15740"/>
        <dbReference type="ChEBI" id="CHEBI:57959"/>
        <dbReference type="ChEBI" id="CHEBI:58629"/>
        <dbReference type="EC" id="3.5.1.9"/>
    </reaction>
</comment>
<comment type="cofactor">
    <cofactor evidence="1">
        <name>Zn(2+)</name>
        <dbReference type="ChEBI" id="CHEBI:29105"/>
    </cofactor>
    <text evidence="1">Binds 2 zinc ions per subunit.</text>
</comment>
<comment type="pathway">
    <text evidence="1">Amino-acid degradation; L-tryptophan degradation via kynurenine pathway; L-kynurenine from L-tryptophan: step 2/2.</text>
</comment>
<comment type="subunit">
    <text evidence="1">Homodimer.</text>
</comment>
<comment type="similarity">
    <text evidence="1">Belongs to the Cyclase 1 superfamily. KynB family.</text>
</comment>
<keyword id="KW-0378">Hydrolase</keyword>
<keyword id="KW-0479">Metal-binding</keyword>
<keyword id="KW-0823">Tryptophan catabolism</keyword>
<keyword id="KW-0862">Zinc</keyword>